<comment type="function">
    <text evidence="1">DNA-dependent RNA polymerase catalyzes the transcription of DNA into RNA using the four ribonucleoside triphosphates as substrates.</text>
</comment>
<comment type="catalytic activity">
    <reaction evidence="1">
        <text>RNA(n) + a ribonucleoside 5'-triphosphate = RNA(n+1) + diphosphate</text>
        <dbReference type="Rhea" id="RHEA:21248"/>
        <dbReference type="Rhea" id="RHEA-COMP:14527"/>
        <dbReference type="Rhea" id="RHEA-COMP:17342"/>
        <dbReference type="ChEBI" id="CHEBI:33019"/>
        <dbReference type="ChEBI" id="CHEBI:61557"/>
        <dbReference type="ChEBI" id="CHEBI:140395"/>
        <dbReference type="EC" id="2.7.7.6"/>
    </reaction>
</comment>
<comment type="subunit">
    <text evidence="1">The RNAP catalytic core consists of 2 alpha, 1 beta, 1 beta' and 1 omega subunit. When a sigma factor is associated with the core the holoenzyme is formed, which can initiate transcription.</text>
</comment>
<comment type="similarity">
    <text evidence="1">Belongs to the RNA polymerase beta chain family.</text>
</comment>
<gene>
    <name evidence="1" type="primary">rpoB</name>
    <name type="ordered locus">MMAR_0995</name>
</gene>
<keyword id="KW-0240">DNA-directed RNA polymerase</keyword>
<keyword id="KW-0548">Nucleotidyltransferase</keyword>
<keyword id="KW-1185">Reference proteome</keyword>
<keyword id="KW-0804">Transcription</keyword>
<keyword id="KW-0808">Transferase</keyword>
<sequence>MLEGRILADFRQTDASLHQGRPQSSSNSSVPGAPNRVSFAKLREPLEVPGLLDVQTDSFEWLIGSQRWRESAAQRGDATPVGGLEEVLYELSPIEDFSGSMSLSFSDPRFDEVKAPVDECKDKDMTYAAPLFVTAEFINNNTGEIKSQTVFMGDFPMMTEKGTFIINGTERVVVSQLVRSPGVYFDETIDKSTDKLLHSVKVIPSRGAWLEFDVDKRDTVGVRIDRKRRQPVTVLLKALGWSNEQIHERFGFSEIMMGTLEKDNTAGTDEALLDIYRKLRPGEPPTKESAQTLLENLFFKEKRYDLARVGRYKVNKKLGLNAGQPITSSTLTEEDVVATIEYLVRLHEGQTAMTAPGGVEVPVETDDIDHFGNRRLRTVGELIQNQIRVGMSRMERVVRERMTTQDVEAITPQTLINIRPVVAAIKEFFGTSQLSQFMDQNNPLSGLTHKRRLSALGPGGLSRERAGLEVRDVHPSHYGRMCPIETPEGPNIGLIGSLSVYARVNPFGFIETPYRKVVDGVVSDEIHYLTADEEDRHVVAQANSPIDAQGRFVEPRVLVRRKAGEVEYVPSSEVDYMDVSPRQMVSVATAMIPFLEHDDANRALMGANMQRQAVPLVRSEAPLVGTGMELRAAIDAGDVVVADKAGVIEEVSADYITVMADDGTRHTYRMRKFARSNHGTCANQSPIVDAGERVEAGQVIADGPCTQNGEMALGKNLLVAIMPWEGHNYEDAIILSNRLVEEDVLTSIHIEEHEIDARDTKLGAEEITRDIPNVSDEVLADLDERGIVRIGAEVRDGDILVGKVTPKGETELTPEERLLRAIFGEKAREVRDTSLKVPHGESGKVIGIRVFSREDDDELPAGVNELVRVYVAQKRKISDGDKLAGRHGNKGVIGKILPAEDMPFLPDGTPVDIILNTHGVPRRMNIGQILETHLGWVAKSGWNIDVANGVPEWAGKLPENLLSAQPDSIVSTPVFDGAQEAELQGLLSATLPNRDGEVLVDGDGKAKLFDGRSGEPFPYPVTVGYMYIMKLHHLVDDKIHARSTGPYSMITQQPLGGKAQFGGQRFGEMECWAMQAYGAAYTLQELLTIKSDDTVGRVKVYEAIVKGENIPEPGIPESFKVLLKELQSLCLNVEVLSSDGAAIELREGEDEDLERAAANLGINLSRNESASVEDLA</sequence>
<proteinExistence type="inferred from homology"/>
<protein>
    <recommendedName>
        <fullName evidence="1">DNA-directed RNA polymerase subunit beta</fullName>
        <shortName evidence="1">RNAP subunit beta</shortName>
        <ecNumber evidence="1">2.7.7.6</ecNumber>
    </recommendedName>
    <alternativeName>
        <fullName evidence="1">RNA polymerase subunit beta</fullName>
    </alternativeName>
    <alternativeName>
        <fullName evidence="1">Transcriptase subunit beta</fullName>
    </alternativeName>
</protein>
<accession>B2HSJ3</accession>
<evidence type="ECO:0000255" key="1">
    <source>
        <dbReference type="HAMAP-Rule" id="MF_01321"/>
    </source>
</evidence>
<evidence type="ECO:0000256" key="2">
    <source>
        <dbReference type="SAM" id="MobiDB-lite"/>
    </source>
</evidence>
<feature type="chain" id="PRO_1000141714" description="DNA-directed RNA polymerase subunit beta">
    <location>
        <begin position="1"/>
        <end position="1176"/>
    </location>
</feature>
<feature type="region of interest" description="Disordered" evidence="2">
    <location>
        <begin position="13"/>
        <end position="35"/>
    </location>
</feature>
<feature type="compositionally biased region" description="Polar residues" evidence="2">
    <location>
        <begin position="13"/>
        <end position="30"/>
    </location>
</feature>
<reference key="1">
    <citation type="journal article" date="2008" name="Genome Res.">
        <title>Insights from the complete genome sequence of Mycobacterium marinum on the evolution of Mycobacterium tuberculosis.</title>
        <authorList>
            <person name="Stinear T.P."/>
            <person name="Seemann T."/>
            <person name="Harrison P.F."/>
            <person name="Jenkin G.A."/>
            <person name="Davies J.K."/>
            <person name="Johnson P.D."/>
            <person name="Abdellah Z."/>
            <person name="Arrowsmith C."/>
            <person name="Chillingworth T."/>
            <person name="Churcher C."/>
            <person name="Clarke K."/>
            <person name="Cronin A."/>
            <person name="Davis P."/>
            <person name="Goodhead I."/>
            <person name="Holroyd N."/>
            <person name="Jagels K."/>
            <person name="Lord A."/>
            <person name="Moule S."/>
            <person name="Mungall K."/>
            <person name="Norbertczak H."/>
            <person name="Quail M.A."/>
            <person name="Rabbinowitsch E."/>
            <person name="Walker D."/>
            <person name="White B."/>
            <person name="Whitehead S."/>
            <person name="Small P.L."/>
            <person name="Brosch R."/>
            <person name="Ramakrishnan L."/>
            <person name="Fischbach M.A."/>
            <person name="Parkhill J."/>
            <person name="Cole S.T."/>
        </authorList>
    </citation>
    <scope>NUCLEOTIDE SEQUENCE [LARGE SCALE GENOMIC DNA]</scope>
    <source>
        <strain>ATCC BAA-535 / M</strain>
    </source>
</reference>
<dbReference type="EC" id="2.7.7.6" evidence="1"/>
<dbReference type="EMBL" id="CP000854">
    <property type="protein sequence ID" value="ACC39451.1"/>
    <property type="molecule type" value="Genomic_DNA"/>
</dbReference>
<dbReference type="SMR" id="B2HSJ3"/>
<dbReference type="STRING" id="216594.MMAR_0995"/>
<dbReference type="KEGG" id="mmi:MMAR_0995"/>
<dbReference type="eggNOG" id="COG0085">
    <property type="taxonomic scope" value="Bacteria"/>
</dbReference>
<dbReference type="HOGENOM" id="CLU_000524_4_1_11"/>
<dbReference type="OrthoDB" id="9803954at2"/>
<dbReference type="Proteomes" id="UP000001190">
    <property type="component" value="Chromosome"/>
</dbReference>
<dbReference type="GO" id="GO:0000428">
    <property type="term" value="C:DNA-directed RNA polymerase complex"/>
    <property type="evidence" value="ECO:0007669"/>
    <property type="project" value="UniProtKB-KW"/>
</dbReference>
<dbReference type="GO" id="GO:0003677">
    <property type="term" value="F:DNA binding"/>
    <property type="evidence" value="ECO:0007669"/>
    <property type="project" value="UniProtKB-UniRule"/>
</dbReference>
<dbReference type="GO" id="GO:0003899">
    <property type="term" value="F:DNA-directed RNA polymerase activity"/>
    <property type="evidence" value="ECO:0007669"/>
    <property type="project" value="UniProtKB-UniRule"/>
</dbReference>
<dbReference type="GO" id="GO:0032549">
    <property type="term" value="F:ribonucleoside binding"/>
    <property type="evidence" value="ECO:0007669"/>
    <property type="project" value="InterPro"/>
</dbReference>
<dbReference type="GO" id="GO:0006351">
    <property type="term" value="P:DNA-templated transcription"/>
    <property type="evidence" value="ECO:0007669"/>
    <property type="project" value="UniProtKB-UniRule"/>
</dbReference>
<dbReference type="CDD" id="cd00653">
    <property type="entry name" value="RNA_pol_B_RPB2"/>
    <property type="match status" value="1"/>
</dbReference>
<dbReference type="FunFam" id="2.40.50.150:FF:000001">
    <property type="entry name" value="DNA-directed RNA polymerase subunit beta"/>
    <property type="match status" value="1"/>
</dbReference>
<dbReference type="FunFam" id="3.90.1800.10:FF:000005">
    <property type="entry name" value="DNA-directed RNA polymerase subunit beta"/>
    <property type="match status" value="1"/>
</dbReference>
<dbReference type="Gene3D" id="2.40.50.100">
    <property type="match status" value="1"/>
</dbReference>
<dbReference type="Gene3D" id="2.40.50.150">
    <property type="match status" value="1"/>
</dbReference>
<dbReference type="Gene3D" id="3.90.1100.10">
    <property type="match status" value="1"/>
</dbReference>
<dbReference type="Gene3D" id="2.30.150.10">
    <property type="entry name" value="DNA-directed RNA polymerase, beta subunit, external 1 domain"/>
    <property type="match status" value="1"/>
</dbReference>
<dbReference type="Gene3D" id="2.40.270.10">
    <property type="entry name" value="DNA-directed RNA polymerase, subunit 2, domain 6"/>
    <property type="match status" value="1"/>
</dbReference>
<dbReference type="Gene3D" id="3.90.1800.10">
    <property type="entry name" value="RNA polymerase alpha subunit dimerisation domain"/>
    <property type="match status" value="1"/>
</dbReference>
<dbReference type="Gene3D" id="3.90.1110.10">
    <property type="entry name" value="RNA polymerase Rpb2, domain 2"/>
    <property type="match status" value="1"/>
</dbReference>
<dbReference type="HAMAP" id="MF_01321">
    <property type="entry name" value="RNApol_bact_RpoB"/>
    <property type="match status" value="1"/>
</dbReference>
<dbReference type="InterPro" id="IPR042107">
    <property type="entry name" value="DNA-dir_RNA_pol_bsu_ext_1_sf"/>
</dbReference>
<dbReference type="InterPro" id="IPR019462">
    <property type="entry name" value="DNA-dir_RNA_pol_bsu_external_1"/>
</dbReference>
<dbReference type="InterPro" id="IPR015712">
    <property type="entry name" value="DNA-dir_RNA_pol_su2"/>
</dbReference>
<dbReference type="InterPro" id="IPR007120">
    <property type="entry name" value="DNA-dir_RNAP_su2_dom"/>
</dbReference>
<dbReference type="InterPro" id="IPR037033">
    <property type="entry name" value="DNA-dir_RNAP_su2_hyb_sf"/>
</dbReference>
<dbReference type="InterPro" id="IPR010243">
    <property type="entry name" value="RNA_pol_bsu_bac"/>
</dbReference>
<dbReference type="InterPro" id="IPR007121">
    <property type="entry name" value="RNA_pol_bsu_CS"/>
</dbReference>
<dbReference type="InterPro" id="IPR007644">
    <property type="entry name" value="RNA_pol_bsu_protrusion"/>
</dbReference>
<dbReference type="InterPro" id="IPR007642">
    <property type="entry name" value="RNA_pol_Rpb2_2"/>
</dbReference>
<dbReference type="InterPro" id="IPR037034">
    <property type="entry name" value="RNA_pol_Rpb2_2_sf"/>
</dbReference>
<dbReference type="InterPro" id="IPR007645">
    <property type="entry name" value="RNA_pol_Rpb2_3"/>
</dbReference>
<dbReference type="InterPro" id="IPR007641">
    <property type="entry name" value="RNA_pol_Rpb2_7"/>
</dbReference>
<dbReference type="InterPro" id="IPR014724">
    <property type="entry name" value="RNA_pol_RPB2_OB-fold"/>
</dbReference>
<dbReference type="NCBIfam" id="NF001616">
    <property type="entry name" value="PRK00405.1"/>
    <property type="match status" value="1"/>
</dbReference>
<dbReference type="NCBIfam" id="TIGR02013">
    <property type="entry name" value="rpoB"/>
    <property type="match status" value="1"/>
</dbReference>
<dbReference type="PANTHER" id="PTHR20856">
    <property type="entry name" value="DNA-DIRECTED RNA POLYMERASE I SUBUNIT 2"/>
    <property type="match status" value="1"/>
</dbReference>
<dbReference type="Pfam" id="PF04563">
    <property type="entry name" value="RNA_pol_Rpb2_1"/>
    <property type="match status" value="1"/>
</dbReference>
<dbReference type="Pfam" id="PF04561">
    <property type="entry name" value="RNA_pol_Rpb2_2"/>
    <property type="match status" value="1"/>
</dbReference>
<dbReference type="Pfam" id="PF04565">
    <property type="entry name" value="RNA_pol_Rpb2_3"/>
    <property type="match status" value="1"/>
</dbReference>
<dbReference type="Pfam" id="PF10385">
    <property type="entry name" value="RNA_pol_Rpb2_45"/>
    <property type="match status" value="1"/>
</dbReference>
<dbReference type="Pfam" id="PF00562">
    <property type="entry name" value="RNA_pol_Rpb2_6"/>
    <property type="match status" value="1"/>
</dbReference>
<dbReference type="Pfam" id="PF04560">
    <property type="entry name" value="RNA_pol_Rpb2_7"/>
    <property type="match status" value="1"/>
</dbReference>
<dbReference type="SUPFAM" id="SSF64484">
    <property type="entry name" value="beta and beta-prime subunits of DNA dependent RNA-polymerase"/>
    <property type="match status" value="1"/>
</dbReference>
<dbReference type="PROSITE" id="PS01166">
    <property type="entry name" value="RNA_POL_BETA"/>
    <property type="match status" value="1"/>
</dbReference>
<name>RPOB_MYCMM</name>
<organism>
    <name type="scientific">Mycobacterium marinum (strain ATCC BAA-535 / M)</name>
    <dbReference type="NCBI Taxonomy" id="216594"/>
    <lineage>
        <taxon>Bacteria</taxon>
        <taxon>Bacillati</taxon>
        <taxon>Actinomycetota</taxon>
        <taxon>Actinomycetes</taxon>
        <taxon>Mycobacteriales</taxon>
        <taxon>Mycobacteriaceae</taxon>
        <taxon>Mycobacterium</taxon>
        <taxon>Mycobacterium ulcerans group</taxon>
    </lineage>
</organism>